<organism>
    <name type="scientific">Desulfitobacterium hafniense (strain Y51)</name>
    <dbReference type="NCBI Taxonomy" id="138119"/>
    <lineage>
        <taxon>Bacteria</taxon>
        <taxon>Bacillati</taxon>
        <taxon>Bacillota</taxon>
        <taxon>Clostridia</taxon>
        <taxon>Eubacteriales</taxon>
        <taxon>Desulfitobacteriaceae</taxon>
        <taxon>Desulfitobacterium</taxon>
    </lineage>
</organism>
<dbReference type="EC" id="4.1.1.65" evidence="1"/>
<dbReference type="EMBL" id="AP008230">
    <property type="protein sequence ID" value="BAE84185.1"/>
    <property type="molecule type" value="Genomic_DNA"/>
</dbReference>
<dbReference type="RefSeq" id="WP_011460299.1">
    <property type="nucleotide sequence ID" value="NC_007907.1"/>
</dbReference>
<dbReference type="SMR" id="Q24UV7"/>
<dbReference type="STRING" id="138119.DSY2396"/>
<dbReference type="KEGG" id="dsy:DSY2396"/>
<dbReference type="eggNOG" id="COG0688">
    <property type="taxonomic scope" value="Bacteria"/>
</dbReference>
<dbReference type="HOGENOM" id="CLU_029061_2_2_9"/>
<dbReference type="UniPathway" id="UPA00558">
    <property type="reaction ID" value="UER00616"/>
</dbReference>
<dbReference type="Proteomes" id="UP000001946">
    <property type="component" value="Chromosome"/>
</dbReference>
<dbReference type="GO" id="GO:0005886">
    <property type="term" value="C:plasma membrane"/>
    <property type="evidence" value="ECO:0007669"/>
    <property type="project" value="UniProtKB-SubCell"/>
</dbReference>
<dbReference type="GO" id="GO:0004609">
    <property type="term" value="F:phosphatidylserine decarboxylase activity"/>
    <property type="evidence" value="ECO:0007669"/>
    <property type="project" value="UniProtKB-UniRule"/>
</dbReference>
<dbReference type="GO" id="GO:0006646">
    <property type="term" value="P:phosphatidylethanolamine biosynthetic process"/>
    <property type="evidence" value="ECO:0007669"/>
    <property type="project" value="UniProtKB-UniRule"/>
</dbReference>
<dbReference type="HAMAP" id="MF_00663">
    <property type="entry name" value="PS_decarb_PSD_B_type2"/>
    <property type="match status" value="1"/>
</dbReference>
<dbReference type="InterPro" id="IPR003817">
    <property type="entry name" value="PS_Dcarbxylase"/>
</dbReference>
<dbReference type="InterPro" id="IPR033177">
    <property type="entry name" value="PSD-B"/>
</dbReference>
<dbReference type="InterPro" id="IPR033179">
    <property type="entry name" value="PSD_type2_pro"/>
</dbReference>
<dbReference type="NCBIfam" id="NF001941">
    <property type="entry name" value="PRK00723.1"/>
    <property type="match status" value="1"/>
</dbReference>
<dbReference type="NCBIfam" id="TIGR00163">
    <property type="entry name" value="PS_decarb"/>
    <property type="match status" value="1"/>
</dbReference>
<dbReference type="PANTHER" id="PTHR10067">
    <property type="entry name" value="PHOSPHATIDYLSERINE DECARBOXYLASE"/>
    <property type="match status" value="1"/>
</dbReference>
<dbReference type="PANTHER" id="PTHR10067:SF17">
    <property type="entry name" value="PHOSPHATIDYLSERINE DECARBOXYLASE PROENZYME 2"/>
    <property type="match status" value="1"/>
</dbReference>
<dbReference type="Pfam" id="PF02666">
    <property type="entry name" value="PS_Dcarbxylase"/>
    <property type="match status" value="1"/>
</dbReference>
<protein>
    <recommendedName>
        <fullName evidence="1">Phosphatidylserine decarboxylase proenzyme</fullName>
        <ecNumber evidence="1">4.1.1.65</ecNumber>
    </recommendedName>
    <component>
        <recommendedName>
            <fullName evidence="1">Phosphatidylserine decarboxylase alpha chain</fullName>
        </recommendedName>
    </component>
    <component>
        <recommendedName>
            <fullName evidence="1">Phosphatidylserine decarboxylase beta chain</fullName>
        </recommendedName>
    </component>
</protein>
<comment type="function">
    <text evidence="1">Catalyzes the formation of phosphatidylethanolamine (PtdEtn) from phosphatidylserine (PtdSer).</text>
</comment>
<comment type="catalytic activity">
    <reaction evidence="1">
        <text>a 1,2-diacyl-sn-glycero-3-phospho-L-serine + H(+) = a 1,2-diacyl-sn-glycero-3-phosphoethanolamine + CO2</text>
        <dbReference type="Rhea" id="RHEA:20828"/>
        <dbReference type="ChEBI" id="CHEBI:15378"/>
        <dbReference type="ChEBI" id="CHEBI:16526"/>
        <dbReference type="ChEBI" id="CHEBI:57262"/>
        <dbReference type="ChEBI" id="CHEBI:64612"/>
        <dbReference type="EC" id="4.1.1.65"/>
    </reaction>
</comment>
<comment type="cofactor">
    <cofactor evidence="1">
        <name>pyruvate</name>
        <dbReference type="ChEBI" id="CHEBI:15361"/>
    </cofactor>
    <text evidence="1">Binds 1 pyruvoyl group covalently per subunit.</text>
</comment>
<comment type="pathway">
    <text evidence="1">Phospholipid metabolism; phosphatidylethanolamine biosynthesis; phosphatidylethanolamine from CDP-diacylglycerol: step 2/2.</text>
</comment>
<comment type="subunit">
    <text evidence="1">Heterodimer of a large membrane-associated beta subunit and a small pyruvoyl-containing alpha subunit.</text>
</comment>
<comment type="subcellular location">
    <subcellularLocation>
        <location evidence="1">Cell membrane</location>
        <topology evidence="1">Peripheral membrane protein</topology>
    </subcellularLocation>
</comment>
<comment type="PTM">
    <text evidence="1">Is synthesized initially as an inactive proenzyme. Formation of the active enzyme involves a self-maturation process in which the active site pyruvoyl group is generated from an internal serine residue via an autocatalytic post-translational modification. Two non-identical subunits are generated from the proenzyme in this reaction, and the pyruvate is formed at the N-terminus of the alpha chain, which is derived from the carboxyl end of the proenzyme. The autoendoproteolytic cleavage occurs by a canonical serine protease mechanism, in which the side chain hydroxyl group of the serine supplies its oxygen atom to form the C-terminus of the beta chain, while the remainder of the serine residue undergoes an oxidative deamination to produce ammonia and the pyruvoyl prosthetic group on the alpha chain. During this reaction, the Ser that is part of the protease active site of the proenzyme becomes the pyruvoyl prosthetic group, which constitutes an essential element of the active site of the mature decarboxylase.</text>
</comment>
<comment type="similarity">
    <text evidence="1">Belongs to the phosphatidylserine decarboxylase family. PSD-B subfamily. Prokaryotic type II sub-subfamily.</text>
</comment>
<evidence type="ECO:0000255" key="1">
    <source>
        <dbReference type="HAMAP-Rule" id="MF_00663"/>
    </source>
</evidence>
<keyword id="KW-1003">Cell membrane</keyword>
<keyword id="KW-0210">Decarboxylase</keyword>
<keyword id="KW-0444">Lipid biosynthesis</keyword>
<keyword id="KW-0443">Lipid metabolism</keyword>
<keyword id="KW-0456">Lyase</keyword>
<keyword id="KW-0472">Membrane</keyword>
<keyword id="KW-0594">Phospholipid biosynthesis</keyword>
<keyword id="KW-1208">Phospholipid metabolism</keyword>
<keyword id="KW-0670">Pyruvate</keyword>
<keyword id="KW-1185">Reference proteome</keyword>
<keyword id="KW-0865">Zymogen</keyword>
<proteinExistence type="inferred from homology"/>
<feature type="chain" id="PRO_1000026620" description="Phosphatidylserine decarboxylase beta chain" evidence="1">
    <location>
        <begin position="1"/>
        <end position="255"/>
    </location>
</feature>
<feature type="chain" id="PRO_1000026621" description="Phosphatidylserine decarboxylase alpha chain" evidence="1">
    <location>
        <begin position="256"/>
        <end position="298"/>
    </location>
</feature>
<feature type="active site" description="Charge relay system; for autoendoproteolytic cleavage activity" evidence="1">
    <location>
        <position position="113"/>
    </location>
</feature>
<feature type="active site" description="Charge relay system; for autoendoproteolytic cleavage activity" evidence="1">
    <location>
        <position position="169"/>
    </location>
</feature>
<feature type="active site" description="Charge relay system; for autoendoproteolytic cleavage activity" evidence="1">
    <location>
        <position position="256"/>
    </location>
</feature>
<feature type="active site" description="Schiff-base intermediate with substrate; via pyruvic acid; for decarboxylase activity" evidence="1">
    <location>
        <position position="256"/>
    </location>
</feature>
<feature type="site" description="Cleavage (non-hydrolytic); by autocatalysis" evidence="1">
    <location>
        <begin position="255"/>
        <end position="256"/>
    </location>
</feature>
<feature type="modified residue" description="Pyruvic acid (Ser); by autocatalysis" evidence="1">
    <location>
        <position position="256"/>
    </location>
</feature>
<name>PSD_DESHY</name>
<sequence length="298" mass="34605">MIKYYDRKTQTYQIEKVAGEKMIRWTYSSPVGMRLLETVVKKRMCSSFYGWYLDRPISRRKIHPFVCKFDLDLSIAEKNLKEFSSFNDFFYRKLKPSARSIDPCQDSLISLGDGKLLAYEDIDLDCLVQVKGLTYSLKELIKDPETASKYKRGTCLILRLCPTDYHRFHFIDSGICEPSHRIKGSYYSVNPVALQKVAKLFCENKREWSIFHSDHFGDILTIEVGATFVGSIIQSYTPHQPVARGDEKGYFKFGGSTVLLFFEENKIKIDPDIVEQTKLGYETYVLFGEKVGVRHKRR</sequence>
<reference key="1">
    <citation type="journal article" date="2006" name="J. Bacteriol.">
        <title>Complete genome sequence of the dehalorespiring bacterium Desulfitobacterium hafniense Y51 and comparison with Dehalococcoides ethenogenes 195.</title>
        <authorList>
            <person name="Nonaka H."/>
            <person name="Keresztes G."/>
            <person name="Shinoda Y."/>
            <person name="Ikenaga Y."/>
            <person name="Abe M."/>
            <person name="Naito K."/>
            <person name="Inatomi K."/>
            <person name="Furukawa K."/>
            <person name="Inui M."/>
            <person name="Yukawa H."/>
        </authorList>
    </citation>
    <scope>NUCLEOTIDE SEQUENCE [LARGE SCALE GENOMIC DNA]</scope>
    <source>
        <strain>Y51</strain>
    </source>
</reference>
<gene>
    <name evidence="1" type="primary">psd</name>
    <name type="ordered locus">DSY2396</name>
</gene>
<accession>Q24UV7</accession>